<keyword id="KW-0002">3D-structure</keyword>
<keyword id="KW-1283">Bacterial microcompartment</keyword>
<keyword id="KW-0120">Carbon dioxide fixation</keyword>
<keyword id="KW-1282">Carboxysome</keyword>
<keyword id="KW-0602">Photosynthesis</keyword>
<keyword id="KW-0677">Repeat</keyword>
<proteinExistence type="evidence at protein level"/>
<feature type="chain" id="PRO_0000452077" description="Carboxysome shell protein CsoS1D">
    <location>
        <begin position="1"/>
        <end position="256"/>
    </location>
</feature>
<feature type="domain" description="BMC circularly permuted 1" evidence="1">
    <location>
        <begin position="55"/>
        <end position="157"/>
    </location>
</feature>
<feature type="domain" description="BMC circularly permuted 2" evidence="1">
    <location>
        <begin position="158"/>
        <end position="256"/>
    </location>
</feature>
<feature type="region of interest" description="Disordered" evidence="2">
    <location>
        <begin position="1"/>
        <end position="24"/>
    </location>
</feature>
<feature type="short sequence motif" description="Gates the pore" evidence="3 8">
    <location>
        <begin position="120"/>
        <end position="121"/>
    </location>
</feature>
<feature type="helix" evidence="10">
    <location>
        <begin position="51"/>
        <end position="53"/>
    </location>
</feature>
<feature type="strand" evidence="11">
    <location>
        <begin position="55"/>
        <end position="64"/>
    </location>
</feature>
<feature type="helix" evidence="11">
    <location>
        <begin position="67"/>
        <end position="76"/>
    </location>
</feature>
<feature type="strand" evidence="11">
    <location>
        <begin position="87"/>
        <end position="95"/>
    </location>
</feature>
<feature type="helix" evidence="11">
    <location>
        <begin position="96"/>
        <end position="98"/>
    </location>
</feature>
<feature type="helix" evidence="11">
    <location>
        <begin position="99"/>
        <end position="108"/>
    </location>
</feature>
<feature type="strand" evidence="10">
    <location>
        <begin position="109"/>
        <end position="111"/>
    </location>
</feature>
<feature type="strand" evidence="11">
    <location>
        <begin position="113"/>
        <end position="118"/>
    </location>
</feature>
<feature type="strand" evidence="11">
    <location>
        <begin position="124"/>
        <end position="131"/>
    </location>
</feature>
<feature type="helix" evidence="11">
    <location>
        <begin position="133"/>
        <end position="147"/>
    </location>
</feature>
<feature type="helix" evidence="10">
    <location>
        <begin position="151"/>
        <end position="153"/>
    </location>
</feature>
<feature type="strand" evidence="11">
    <location>
        <begin position="161"/>
        <end position="167"/>
    </location>
</feature>
<feature type="helix" evidence="11">
    <location>
        <begin position="170"/>
        <end position="177"/>
    </location>
</feature>
<feature type="turn" evidence="11">
    <location>
        <begin position="178"/>
        <end position="180"/>
    </location>
</feature>
<feature type="strand" evidence="11">
    <location>
        <begin position="191"/>
        <end position="199"/>
    </location>
</feature>
<feature type="helix" evidence="11">
    <location>
        <begin position="200"/>
        <end position="202"/>
    </location>
</feature>
<feature type="helix" evidence="11">
    <location>
        <begin position="203"/>
        <end position="213"/>
    </location>
</feature>
<feature type="strand" evidence="11">
    <location>
        <begin position="220"/>
        <end position="222"/>
    </location>
</feature>
<feature type="strand" evidence="11">
    <location>
        <begin position="224"/>
        <end position="234"/>
    </location>
</feature>
<feature type="helix" evidence="11">
    <location>
        <begin position="236"/>
        <end position="251"/>
    </location>
</feature>
<dbReference type="EMBL" id="BX548174">
    <property type="protein sequence ID" value="CAE19006.1"/>
    <property type="molecule type" value="Genomic_DNA"/>
</dbReference>
<dbReference type="RefSeq" id="WP_011132182.1">
    <property type="nucleotide sequence ID" value="NC_005072.1"/>
</dbReference>
<dbReference type="PDB" id="3F56">
    <property type="method" value="X-ray"/>
    <property type="resolution" value="2.30 A"/>
    <property type="chains" value="A/B/C/D/E/F=1-256"/>
</dbReference>
<dbReference type="PDB" id="3FCH">
    <property type="method" value="X-ray"/>
    <property type="resolution" value="2.20 A"/>
    <property type="chains" value="A/B=1-256"/>
</dbReference>
<dbReference type="PDBsum" id="3F56"/>
<dbReference type="PDBsum" id="3FCH"/>
<dbReference type="SMR" id="Q7V2D3"/>
<dbReference type="STRING" id="59919.PMM0547"/>
<dbReference type="KEGG" id="pmm:PMM0547"/>
<dbReference type="eggNOG" id="COG4577">
    <property type="taxonomic scope" value="Bacteria"/>
</dbReference>
<dbReference type="HOGENOM" id="CLU_091281_0_0_3"/>
<dbReference type="OrthoDB" id="5800762at2"/>
<dbReference type="EvolutionaryTrace" id="Q7V2D3"/>
<dbReference type="Proteomes" id="UP000001026">
    <property type="component" value="Chromosome"/>
</dbReference>
<dbReference type="GO" id="GO:0031470">
    <property type="term" value="C:carboxysome"/>
    <property type="evidence" value="ECO:0007669"/>
    <property type="project" value="UniProtKB-SubCell"/>
</dbReference>
<dbReference type="GO" id="GO:0043886">
    <property type="term" value="F:structural constituent of carboxysome shell"/>
    <property type="evidence" value="ECO:0007669"/>
    <property type="project" value="UniProtKB-ARBA"/>
</dbReference>
<dbReference type="GO" id="GO:0015977">
    <property type="term" value="P:carbon fixation"/>
    <property type="evidence" value="ECO:0007669"/>
    <property type="project" value="UniProtKB-KW"/>
</dbReference>
<dbReference type="GO" id="GO:0015979">
    <property type="term" value="P:photosynthesis"/>
    <property type="evidence" value="ECO:0007669"/>
    <property type="project" value="UniProtKB-KW"/>
</dbReference>
<dbReference type="CDD" id="cd07051">
    <property type="entry name" value="BMC_like_1_repeat1"/>
    <property type="match status" value="1"/>
</dbReference>
<dbReference type="CDD" id="cd07052">
    <property type="entry name" value="BMC_like_1_repeat2"/>
    <property type="match status" value="1"/>
</dbReference>
<dbReference type="Gene3D" id="3.30.70.1710">
    <property type="match status" value="2"/>
</dbReference>
<dbReference type="InterPro" id="IPR044870">
    <property type="entry name" value="BMC_CP"/>
</dbReference>
<dbReference type="InterPro" id="IPR000249">
    <property type="entry name" value="BMC_dom"/>
</dbReference>
<dbReference type="InterPro" id="IPR037233">
    <property type="entry name" value="CcmK-like_sf"/>
</dbReference>
<dbReference type="Pfam" id="PF00936">
    <property type="entry name" value="BMC"/>
    <property type="match status" value="1"/>
</dbReference>
<dbReference type="SMART" id="SM00877">
    <property type="entry name" value="BMC"/>
    <property type="match status" value="1"/>
</dbReference>
<dbReference type="SUPFAM" id="SSF143414">
    <property type="entry name" value="CcmK-like"/>
    <property type="match status" value="1"/>
</dbReference>
<dbReference type="PROSITE" id="PS51931">
    <property type="entry name" value="BMC_CP"/>
    <property type="match status" value="2"/>
</dbReference>
<evidence type="ECO:0000255" key="1">
    <source>
        <dbReference type="PROSITE-ProRule" id="PRU01279"/>
    </source>
</evidence>
<evidence type="ECO:0000256" key="2">
    <source>
        <dbReference type="SAM" id="MobiDB-lite"/>
    </source>
</evidence>
<evidence type="ECO:0000269" key="3">
    <source>
    </source>
</evidence>
<evidence type="ECO:0000269" key="4">
    <source>
    </source>
</evidence>
<evidence type="ECO:0000269" key="5">
    <source>
    </source>
</evidence>
<evidence type="ECO:0000303" key="6">
    <source>
    </source>
</evidence>
<evidence type="ECO:0000305" key="7">
    <source>
    </source>
</evidence>
<evidence type="ECO:0007744" key="8">
    <source>
        <dbReference type="PDB" id="3F56"/>
    </source>
</evidence>
<evidence type="ECO:0007744" key="9">
    <source>
        <dbReference type="PDB" id="3FCH"/>
    </source>
</evidence>
<evidence type="ECO:0007829" key="10">
    <source>
        <dbReference type="PDB" id="3F56"/>
    </source>
</evidence>
<evidence type="ECO:0007829" key="11">
    <source>
        <dbReference type="PDB" id="3FCH"/>
    </source>
</evidence>
<protein>
    <recommendedName>
        <fullName evidence="6">Carboxysome shell protein CsoS1D</fullName>
    </recommendedName>
</protein>
<reference key="1">
    <citation type="journal article" date="2003" name="Nature">
        <title>Genome divergence in two Prochlorococcus ecotypes reflects oceanic niche differentiation.</title>
        <authorList>
            <person name="Rocap G."/>
            <person name="Larimer F.W."/>
            <person name="Lamerdin J.E."/>
            <person name="Malfatti S."/>
            <person name="Chain P."/>
            <person name="Ahlgren N.A."/>
            <person name="Arellano A."/>
            <person name="Coleman M."/>
            <person name="Hauser L."/>
            <person name="Hess W.R."/>
            <person name="Johnson Z.I."/>
            <person name="Land M.L."/>
            <person name="Lindell D."/>
            <person name="Post A.F."/>
            <person name="Regala W."/>
            <person name="Shah M."/>
            <person name="Shaw S.L."/>
            <person name="Steglich C."/>
            <person name="Sullivan M.B."/>
            <person name="Ting C.S."/>
            <person name="Tolonen A."/>
            <person name="Webb E.A."/>
            <person name="Zinser E.R."/>
            <person name="Chisholm S.W."/>
        </authorList>
    </citation>
    <scope>NUCLEOTIDE SEQUENCE [LARGE SCALE GENOMIC DNA]</scope>
    <source>
        <strain>CCMP1986 / NIES-2087 / MED4</strain>
    </source>
</reference>
<reference key="2">
    <citation type="journal article" date="2012" name="J. Bacteriol.">
        <title>Isolation and characterization of the Prochlorococcus carboxysome reveal the presence of the novel shell protein CsoS1D.</title>
        <authorList>
            <person name="Roberts E.W."/>
            <person name="Cai F."/>
            <person name="Kerfeld C.A."/>
            <person name="Cannon G.C."/>
            <person name="Heinhorst S."/>
        </authorList>
    </citation>
    <scope>PROTEIN ABUNDANCE</scope>
    <scope>SUBCELLULAR LOCATION</scope>
    <source>
        <strain>CCMP1986 / NIES-2087 / MED4</strain>
    </source>
</reference>
<reference key="3">
    <citation type="journal article" date="2015" name="Life">
        <title>Advances in Understanding Carboxysome Assembly in Prochlorococcus and Synechococcus Implicate CsoS2 as a Critical Component.</title>
        <authorList>
            <person name="Cai F."/>
            <person name="Dou Z."/>
            <person name="Bernstein S.L."/>
            <person name="Leverenz R."/>
            <person name="Williams E.B."/>
            <person name="Heinhorst S."/>
            <person name="Shively J."/>
            <person name="Cannon G.C."/>
            <person name="Kerfeld C.A."/>
        </authorList>
    </citation>
    <scope>SUBUNIT</scope>
    <source>
        <strain>CCMP1986 / NIES-2087 / MED4</strain>
    </source>
</reference>
<reference evidence="8 9" key="4">
    <citation type="journal article" date="2009" name="J. Mol. Biol.">
        <title>Identification and structural analysis of a novel carboxysome shell protein with implications for metabolite transport.</title>
        <authorList>
            <person name="Klein M.G."/>
            <person name="Zwart P."/>
            <person name="Bagby S.C."/>
            <person name="Cai F."/>
            <person name="Chisholm S.W."/>
            <person name="Heinhorst S."/>
            <person name="Cannon G.C."/>
            <person name="Kerfeld C.A."/>
        </authorList>
    </citation>
    <scope>X-RAY CRYSTALLOGRAPHY (2.20 ANGSTROMS)</scope>
    <scope>POSSIBLE FUNCTION</scope>
    <scope>IDENTIFICATION</scope>
    <scope>SUBUNIT</scope>
    <scope>SUBCELLULAR LOCATION</scope>
    <scope>DOMAIN</scope>
    <source>
        <strain>CCMP1986 / NIES-2087 / MED4</strain>
    </source>
</reference>
<sequence length="256" mass="27510">MEPTSSLNRGDRKKGSSLVTGSEVQSQSNGASCFITTDSEKSLVSRQASQVEQIELRTYVFLDSLQPQLAAYMGTVSRGFLPIPGDSCLWMEVSPGMAVHRVTDIALKASNVRLGQMIVERAFGSLALYHKDQSTVLHSGDVVLDAIGSEVRKRTKPSTSWTEVICAITPDHAVLINRQNRSGSMIQSGMSMFILETEPAGYVLKAANEAEKSANITIIDVKAVGAFGRLTLAGKEGDVEEAAAAAIRAIDQISNY</sequence>
<gene>
    <name evidence="6" type="primary">csoS1D</name>
    <name type="ordered locus">PMM0547</name>
</gene>
<organism>
    <name type="scientific">Prochlorococcus marinus subsp. pastoris (strain CCMP1986 / NIES-2087 / MED4)</name>
    <dbReference type="NCBI Taxonomy" id="59919"/>
    <lineage>
        <taxon>Bacteria</taxon>
        <taxon>Bacillati</taxon>
        <taxon>Cyanobacteriota</taxon>
        <taxon>Cyanophyceae</taxon>
        <taxon>Synechococcales</taxon>
        <taxon>Prochlorococcaceae</taxon>
        <taxon>Prochlorococcus</taxon>
    </lineage>
</organism>
<accession>Q7V2D3</accession>
<name>CSOSD_PROMP</name>
<comment type="function">
    <text evidence="4 7">Part of the carboxysome shell, a polyhedral inclusion where RuBisCO (ribulose bisphosphate carboxylase, cbbL-cbbS) is sequestered (Probable) (PubMed:22155772). It may control transport of RuBisCO reactants in and out of the carboxysome (Probable). There are estimated to be 6 CsoS1D hexamers per carboxysome (PubMed:22155772).</text>
</comment>
<comment type="subunit">
    <text evidence="3 5">Homotrimer. Forms a dimer of stacked trimers, the same faces interact (PubMed:19328811). A CsoS1-CsoS1D-CsoS2 complex can be isolated following expression in E.coli (PubMed:25826651).</text>
</comment>
<comment type="subcellular location">
    <subcellularLocation>
        <location evidence="4 7">Carboxysome</location>
    </subcellularLocation>
    <text evidence="3 4">Fractionates with shell proteins (PubMed:22155772). This bacterium makes alpha-type carboxysomes (PubMed:19328811).</text>
</comment>
<comment type="domain">
    <text evidence="3">Contains 2 BMC domains, trimerizes in a staggered manner to give a hexamer; each subunit in one trimer interacts with 2 subunits in the facing trimer. In each stacked hexamer one trimer forms a pore of about 14 Angstroms in diameter; open-closed and open-open trimers are seen in crystals. Glu-120 forms a salt bridge with Arg-121 of the adjacent subunit to close the pore. Dimerization of the trimers forms a channel-like compartment (volume 13,610 Angstroms(3)), accessible via an open pore. This channel may be large enough to accomodate transport of substrates into and out of the carboxysome.</text>
</comment>
<comment type="similarity">
    <text evidence="1">Belongs to the EutL/PduB family.</text>
</comment>